<gene>
    <name evidence="2" type="primary">ddl</name>
    <name type="ordered locus">Nmul_A2491</name>
</gene>
<keyword id="KW-0067">ATP-binding</keyword>
<keyword id="KW-0133">Cell shape</keyword>
<keyword id="KW-0961">Cell wall biogenesis/degradation</keyword>
<keyword id="KW-0963">Cytoplasm</keyword>
<keyword id="KW-0436">Ligase</keyword>
<keyword id="KW-0460">Magnesium</keyword>
<keyword id="KW-0464">Manganese</keyword>
<keyword id="KW-0479">Metal-binding</keyword>
<keyword id="KW-0547">Nucleotide-binding</keyword>
<keyword id="KW-0573">Peptidoglycan synthesis</keyword>
<keyword id="KW-1185">Reference proteome</keyword>
<reference key="1">
    <citation type="submission" date="2005-08" db="EMBL/GenBank/DDBJ databases">
        <title>Complete sequence of chromosome 1 of Nitrosospira multiformis ATCC 25196.</title>
        <authorList>
            <person name="Copeland A."/>
            <person name="Lucas S."/>
            <person name="Lapidus A."/>
            <person name="Barry K."/>
            <person name="Detter J.C."/>
            <person name="Glavina T."/>
            <person name="Hammon N."/>
            <person name="Israni S."/>
            <person name="Pitluck S."/>
            <person name="Chain P."/>
            <person name="Malfatti S."/>
            <person name="Shin M."/>
            <person name="Vergez L."/>
            <person name="Schmutz J."/>
            <person name="Larimer F."/>
            <person name="Land M."/>
            <person name="Hauser L."/>
            <person name="Kyrpides N."/>
            <person name="Lykidis A."/>
            <person name="Richardson P."/>
        </authorList>
    </citation>
    <scope>NUCLEOTIDE SEQUENCE [LARGE SCALE GENOMIC DNA]</scope>
    <source>
        <strain>ATCC 25196 / NCIMB 11849 / C 71</strain>
    </source>
</reference>
<proteinExistence type="inferred from homology"/>
<accession>Q2Y641</accession>
<name>DDL_NITMU</name>
<dbReference type="EC" id="6.3.2.4" evidence="2"/>
<dbReference type="EMBL" id="CP000103">
    <property type="protein sequence ID" value="ABB75780.1"/>
    <property type="molecule type" value="Genomic_DNA"/>
</dbReference>
<dbReference type="RefSeq" id="WP_011381779.1">
    <property type="nucleotide sequence ID" value="NC_007614.1"/>
</dbReference>
<dbReference type="SMR" id="Q2Y641"/>
<dbReference type="STRING" id="323848.Nmul_A2491"/>
<dbReference type="KEGG" id="nmu:Nmul_A2491"/>
<dbReference type="eggNOG" id="COG1181">
    <property type="taxonomic scope" value="Bacteria"/>
</dbReference>
<dbReference type="HOGENOM" id="CLU_039268_1_2_4"/>
<dbReference type="OrthoDB" id="9813261at2"/>
<dbReference type="UniPathway" id="UPA00219"/>
<dbReference type="Proteomes" id="UP000002718">
    <property type="component" value="Chromosome"/>
</dbReference>
<dbReference type="GO" id="GO:0005829">
    <property type="term" value="C:cytosol"/>
    <property type="evidence" value="ECO:0007669"/>
    <property type="project" value="TreeGrafter"/>
</dbReference>
<dbReference type="GO" id="GO:0005524">
    <property type="term" value="F:ATP binding"/>
    <property type="evidence" value="ECO:0007669"/>
    <property type="project" value="UniProtKB-KW"/>
</dbReference>
<dbReference type="GO" id="GO:0008716">
    <property type="term" value="F:D-alanine-D-alanine ligase activity"/>
    <property type="evidence" value="ECO:0007669"/>
    <property type="project" value="UniProtKB-UniRule"/>
</dbReference>
<dbReference type="GO" id="GO:0046872">
    <property type="term" value="F:metal ion binding"/>
    <property type="evidence" value="ECO:0007669"/>
    <property type="project" value="UniProtKB-KW"/>
</dbReference>
<dbReference type="GO" id="GO:0071555">
    <property type="term" value="P:cell wall organization"/>
    <property type="evidence" value="ECO:0007669"/>
    <property type="project" value="UniProtKB-KW"/>
</dbReference>
<dbReference type="GO" id="GO:0009252">
    <property type="term" value="P:peptidoglycan biosynthetic process"/>
    <property type="evidence" value="ECO:0007669"/>
    <property type="project" value="UniProtKB-UniRule"/>
</dbReference>
<dbReference type="GO" id="GO:0008360">
    <property type="term" value="P:regulation of cell shape"/>
    <property type="evidence" value="ECO:0007669"/>
    <property type="project" value="UniProtKB-KW"/>
</dbReference>
<dbReference type="FunFam" id="3.30.470.20:FF:000008">
    <property type="entry name" value="D-alanine--D-alanine ligase"/>
    <property type="match status" value="1"/>
</dbReference>
<dbReference type="FunFam" id="3.40.50.20:FF:000013">
    <property type="entry name" value="D-alanine--D-alanine ligase"/>
    <property type="match status" value="1"/>
</dbReference>
<dbReference type="Gene3D" id="3.40.50.20">
    <property type="match status" value="1"/>
</dbReference>
<dbReference type="Gene3D" id="3.30.1490.20">
    <property type="entry name" value="ATP-grasp fold, A domain"/>
    <property type="match status" value="1"/>
</dbReference>
<dbReference type="Gene3D" id="3.30.470.20">
    <property type="entry name" value="ATP-grasp fold, B domain"/>
    <property type="match status" value="1"/>
</dbReference>
<dbReference type="HAMAP" id="MF_00047">
    <property type="entry name" value="Dala_Dala_lig"/>
    <property type="match status" value="1"/>
</dbReference>
<dbReference type="InterPro" id="IPR011761">
    <property type="entry name" value="ATP-grasp"/>
</dbReference>
<dbReference type="InterPro" id="IPR013815">
    <property type="entry name" value="ATP_grasp_subdomain_1"/>
</dbReference>
<dbReference type="InterPro" id="IPR000291">
    <property type="entry name" value="D-Ala_lig_Van_CS"/>
</dbReference>
<dbReference type="InterPro" id="IPR005905">
    <property type="entry name" value="D_ala_D_ala"/>
</dbReference>
<dbReference type="InterPro" id="IPR011095">
    <property type="entry name" value="Dala_Dala_lig_C"/>
</dbReference>
<dbReference type="InterPro" id="IPR011127">
    <property type="entry name" value="Dala_Dala_lig_N"/>
</dbReference>
<dbReference type="InterPro" id="IPR016185">
    <property type="entry name" value="PreATP-grasp_dom_sf"/>
</dbReference>
<dbReference type="NCBIfam" id="TIGR01205">
    <property type="entry name" value="D_ala_D_alaTIGR"/>
    <property type="match status" value="1"/>
</dbReference>
<dbReference type="NCBIfam" id="NF002378">
    <property type="entry name" value="PRK01372.1"/>
    <property type="match status" value="1"/>
</dbReference>
<dbReference type="PANTHER" id="PTHR23132">
    <property type="entry name" value="D-ALANINE--D-ALANINE LIGASE"/>
    <property type="match status" value="1"/>
</dbReference>
<dbReference type="PANTHER" id="PTHR23132:SF23">
    <property type="entry name" value="D-ALANINE--D-ALANINE LIGASE B"/>
    <property type="match status" value="1"/>
</dbReference>
<dbReference type="Pfam" id="PF07478">
    <property type="entry name" value="Dala_Dala_lig_C"/>
    <property type="match status" value="1"/>
</dbReference>
<dbReference type="Pfam" id="PF01820">
    <property type="entry name" value="Dala_Dala_lig_N"/>
    <property type="match status" value="1"/>
</dbReference>
<dbReference type="PIRSF" id="PIRSF039102">
    <property type="entry name" value="Ddl/VanB"/>
    <property type="match status" value="1"/>
</dbReference>
<dbReference type="SUPFAM" id="SSF56059">
    <property type="entry name" value="Glutathione synthetase ATP-binding domain-like"/>
    <property type="match status" value="1"/>
</dbReference>
<dbReference type="SUPFAM" id="SSF52440">
    <property type="entry name" value="PreATP-grasp domain"/>
    <property type="match status" value="1"/>
</dbReference>
<dbReference type="PROSITE" id="PS50975">
    <property type="entry name" value="ATP_GRASP"/>
    <property type="match status" value="1"/>
</dbReference>
<dbReference type="PROSITE" id="PS00843">
    <property type="entry name" value="DALA_DALA_LIGASE_1"/>
    <property type="match status" value="1"/>
</dbReference>
<dbReference type="PROSITE" id="PS00844">
    <property type="entry name" value="DALA_DALA_LIGASE_2"/>
    <property type="match status" value="1"/>
</dbReference>
<protein>
    <recommendedName>
        <fullName evidence="2">D-alanine--D-alanine ligase</fullName>
        <ecNumber evidence="2">6.3.2.4</ecNumber>
    </recommendedName>
    <alternativeName>
        <fullName evidence="2">D-Ala-D-Ala ligase</fullName>
    </alternativeName>
    <alternativeName>
        <fullName evidence="2">D-alanylalanine synthetase</fullName>
    </alternativeName>
</protein>
<organism>
    <name type="scientific">Nitrosospira multiformis (strain ATCC 25196 / NCIMB 11849 / C 71)</name>
    <dbReference type="NCBI Taxonomy" id="323848"/>
    <lineage>
        <taxon>Bacteria</taxon>
        <taxon>Pseudomonadati</taxon>
        <taxon>Pseudomonadota</taxon>
        <taxon>Betaproteobacteria</taxon>
        <taxon>Nitrosomonadales</taxon>
        <taxon>Nitrosomonadaceae</taxon>
        <taxon>Nitrosospira</taxon>
    </lineage>
</organism>
<sequence length="306" mass="32910">MAGSHDFGKVAVLLGGRSAEREISLESGKAVLDALRSSGVDAHPFDPSEQHMDALLQQGYTRAHIALHGRYGEDGTVQGALELLGIPYTGSGVLASALAMDKWRTKLLWQSAGINTPRHILLDEQSDFDAVAKELGLPLIVKPSREGSTIGLSKVREAGEVAAAWHLAARHDAMVLAEQFIEGTELTASILGDVALPLVRIQVEGDLYDYQAKYLSDKTQYFCPSGVSEEQECLIRKQALQAHRLLGCEGWGRVDLILDKSGTPYFLEANTSPGMTTHSLVPMAAKAAGISFEELVLKILGLAHVG</sequence>
<comment type="function">
    <text evidence="2">Cell wall formation.</text>
</comment>
<comment type="catalytic activity">
    <reaction evidence="2">
        <text>2 D-alanine + ATP = D-alanyl-D-alanine + ADP + phosphate + H(+)</text>
        <dbReference type="Rhea" id="RHEA:11224"/>
        <dbReference type="ChEBI" id="CHEBI:15378"/>
        <dbReference type="ChEBI" id="CHEBI:30616"/>
        <dbReference type="ChEBI" id="CHEBI:43474"/>
        <dbReference type="ChEBI" id="CHEBI:57416"/>
        <dbReference type="ChEBI" id="CHEBI:57822"/>
        <dbReference type="ChEBI" id="CHEBI:456216"/>
        <dbReference type="EC" id="6.3.2.4"/>
    </reaction>
</comment>
<comment type="cofactor">
    <cofactor evidence="1">
        <name>Mg(2+)</name>
        <dbReference type="ChEBI" id="CHEBI:18420"/>
    </cofactor>
    <cofactor evidence="1">
        <name>Mn(2+)</name>
        <dbReference type="ChEBI" id="CHEBI:29035"/>
    </cofactor>
    <text evidence="1">Binds 2 magnesium or manganese ions per subunit.</text>
</comment>
<comment type="pathway">
    <text evidence="2">Cell wall biogenesis; peptidoglycan biosynthesis.</text>
</comment>
<comment type="subcellular location">
    <subcellularLocation>
        <location evidence="2">Cytoplasm</location>
    </subcellularLocation>
</comment>
<comment type="similarity">
    <text evidence="2">Belongs to the D-alanine--D-alanine ligase family.</text>
</comment>
<evidence type="ECO:0000250" key="1"/>
<evidence type="ECO:0000255" key="2">
    <source>
        <dbReference type="HAMAP-Rule" id="MF_00047"/>
    </source>
</evidence>
<feature type="chain" id="PRO_0000341139" description="D-alanine--D-alanine ligase">
    <location>
        <begin position="1"/>
        <end position="306"/>
    </location>
</feature>
<feature type="domain" description="ATP-grasp" evidence="2">
    <location>
        <begin position="106"/>
        <end position="301"/>
    </location>
</feature>
<feature type="binding site" evidence="2">
    <location>
        <begin position="132"/>
        <end position="187"/>
    </location>
    <ligand>
        <name>ATP</name>
        <dbReference type="ChEBI" id="CHEBI:30616"/>
    </ligand>
</feature>
<feature type="binding site" evidence="2">
    <location>
        <position position="255"/>
    </location>
    <ligand>
        <name>Mg(2+)</name>
        <dbReference type="ChEBI" id="CHEBI:18420"/>
        <label>1</label>
    </ligand>
</feature>
<feature type="binding site" evidence="2">
    <location>
        <position position="268"/>
    </location>
    <ligand>
        <name>Mg(2+)</name>
        <dbReference type="ChEBI" id="CHEBI:18420"/>
        <label>1</label>
    </ligand>
</feature>
<feature type="binding site" evidence="2">
    <location>
        <position position="268"/>
    </location>
    <ligand>
        <name>Mg(2+)</name>
        <dbReference type="ChEBI" id="CHEBI:18420"/>
        <label>2</label>
    </ligand>
</feature>
<feature type="binding site" evidence="2">
    <location>
        <position position="270"/>
    </location>
    <ligand>
        <name>Mg(2+)</name>
        <dbReference type="ChEBI" id="CHEBI:18420"/>
        <label>2</label>
    </ligand>
</feature>